<gene>
    <name evidence="1" type="primary">tsf</name>
    <name type="ordered locus">OEOE_0976</name>
</gene>
<sequence>MAQITAALVKELREKTSAGIMDAKKALVETNGNMEKAIDVLKERGVAKAAKKADRVAAEGMTDVIEAGNTAAIIELNSETDFVASNEKFLNLLHLTAKVILEHKPADLKAALAIPVEEGTLNDQIVQTSAHTGEKITLRRFNVVEKNDNQTFGVYSHMGGQISVITLLENSDSTTAKDIAMHIAAIAPKYLSREDVPKDVVEHEKSIQMKADDLGNKPDNIKEKIVEGRLGKFLDELALLNQPFVKGEGESVAEYLKKQGATIKSFIRYQVGEGIEKQESNLADEVAKQING</sequence>
<proteinExistence type="inferred from homology"/>
<reference key="1">
    <citation type="journal article" date="2006" name="Proc. Natl. Acad. Sci. U.S.A.">
        <title>Comparative genomics of the lactic acid bacteria.</title>
        <authorList>
            <person name="Makarova K.S."/>
            <person name="Slesarev A."/>
            <person name="Wolf Y.I."/>
            <person name="Sorokin A."/>
            <person name="Mirkin B."/>
            <person name="Koonin E.V."/>
            <person name="Pavlov A."/>
            <person name="Pavlova N."/>
            <person name="Karamychev V."/>
            <person name="Polouchine N."/>
            <person name="Shakhova V."/>
            <person name="Grigoriev I."/>
            <person name="Lou Y."/>
            <person name="Rohksar D."/>
            <person name="Lucas S."/>
            <person name="Huang K."/>
            <person name="Goodstein D.M."/>
            <person name="Hawkins T."/>
            <person name="Plengvidhya V."/>
            <person name="Welker D."/>
            <person name="Hughes J."/>
            <person name="Goh Y."/>
            <person name="Benson A."/>
            <person name="Baldwin K."/>
            <person name="Lee J.-H."/>
            <person name="Diaz-Muniz I."/>
            <person name="Dosti B."/>
            <person name="Smeianov V."/>
            <person name="Wechter W."/>
            <person name="Barabote R."/>
            <person name="Lorca G."/>
            <person name="Altermann E."/>
            <person name="Barrangou R."/>
            <person name="Ganesan B."/>
            <person name="Xie Y."/>
            <person name="Rawsthorne H."/>
            <person name="Tamir D."/>
            <person name="Parker C."/>
            <person name="Breidt F."/>
            <person name="Broadbent J.R."/>
            <person name="Hutkins R."/>
            <person name="O'Sullivan D."/>
            <person name="Steele J."/>
            <person name="Unlu G."/>
            <person name="Saier M.H. Jr."/>
            <person name="Klaenhammer T."/>
            <person name="Richardson P."/>
            <person name="Kozyavkin S."/>
            <person name="Weimer B.C."/>
            <person name="Mills D.A."/>
        </authorList>
    </citation>
    <scope>NUCLEOTIDE SEQUENCE [LARGE SCALE GENOMIC DNA]</scope>
    <source>
        <strain>ATCC BAA-331 / PSU-1</strain>
    </source>
</reference>
<comment type="function">
    <text evidence="1">Associates with the EF-Tu.GDP complex and induces the exchange of GDP to GTP. It remains bound to the aminoacyl-tRNA.EF-Tu.GTP complex up to the GTP hydrolysis stage on the ribosome.</text>
</comment>
<comment type="subcellular location">
    <subcellularLocation>
        <location evidence="1">Cytoplasm</location>
    </subcellularLocation>
</comment>
<comment type="similarity">
    <text evidence="1">Belongs to the EF-Ts family.</text>
</comment>
<dbReference type="EMBL" id="CP000411">
    <property type="protein sequence ID" value="ABJ56885.1"/>
    <property type="molecule type" value="Genomic_DNA"/>
</dbReference>
<dbReference type="RefSeq" id="WP_002820489.1">
    <property type="nucleotide sequence ID" value="NC_008528.1"/>
</dbReference>
<dbReference type="SMR" id="Q04F87"/>
<dbReference type="STRING" id="203123.OEOE_0976"/>
<dbReference type="GeneID" id="75065951"/>
<dbReference type="KEGG" id="ooe:OEOE_0976"/>
<dbReference type="eggNOG" id="COG0264">
    <property type="taxonomic scope" value="Bacteria"/>
</dbReference>
<dbReference type="HOGENOM" id="CLU_047155_0_2_9"/>
<dbReference type="Proteomes" id="UP000000774">
    <property type="component" value="Chromosome"/>
</dbReference>
<dbReference type="GO" id="GO:0005737">
    <property type="term" value="C:cytoplasm"/>
    <property type="evidence" value="ECO:0007669"/>
    <property type="project" value="UniProtKB-SubCell"/>
</dbReference>
<dbReference type="GO" id="GO:0003746">
    <property type="term" value="F:translation elongation factor activity"/>
    <property type="evidence" value="ECO:0007669"/>
    <property type="project" value="UniProtKB-UniRule"/>
</dbReference>
<dbReference type="CDD" id="cd14275">
    <property type="entry name" value="UBA_EF-Ts"/>
    <property type="match status" value="1"/>
</dbReference>
<dbReference type="FunFam" id="1.10.286.20:FF:000001">
    <property type="entry name" value="Elongation factor Ts"/>
    <property type="match status" value="1"/>
</dbReference>
<dbReference type="FunFam" id="1.10.8.10:FF:000001">
    <property type="entry name" value="Elongation factor Ts"/>
    <property type="match status" value="1"/>
</dbReference>
<dbReference type="Gene3D" id="1.10.286.20">
    <property type="match status" value="1"/>
</dbReference>
<dbReference type="Gene3D" id="1.10.8.10">
    <property type="entry name" value="DNA helicase RuvA subunit, C-terminal domain"/>
    <property type="match status" value="1"/>
</dbReference>
<dbReference type="Gene3D" id="3.30.479.20">
    <property type="entry name" value="Elongation factor Ts, dimerisation domain"/>
    <property type="match status" value="2"/>
</dbReference>
<dbReference type="HAMAP" id="MF_00050">
    <property type="entry name" value="EF_Ts"/>
    <property type="match status" value="1"/>
</dbReference>
<dbReference type="InterPro" id="IPR036402">
    <property type="entry name" value="EF-Ts_dimer_sf"/>
</dbReference>
<dbReference type="InterPro" id="IPR001816">
    <property type="entry name" value="Transl_elong_EFTs/EF1B"/>
</dbReference>
<dbReference type="InterPro" id="IPR014039">
    <property type="entry name" value="Transl_elong_EFTs/EF1B_dimer"/>
</dbReference>
<dbReference type="InterPro" id="IPR018101">
    <property type="entry name" value="Transl_elong_Ts_CS"/>
</dbReference>
<dbReference type="InterPro" id="IPR009060">
    <property type="entry name" value="UBA-like_sf"/>
</dbReference>
<dbReference type="NCBIfam" id="TIGR00116">
    <property type="entry name" value="tsf"/>
    <property type="match status" value="1"/>
</dbReference>
<dbReference type="PANTHER" id="PTHR11741">
    <property type="entry name" value="ELONGATION FACTOR TS"/>
    <property type="match status" value="1"/>
</dbReference>
<dbReference type="PANTHER" id="PTHR11741:SF0">
    <property type="entry name" value="ELONGATION FACTOR TS, MITOCHONDRIAL"/>
    <property type="match status" value="1"/>
</dbReference>
<dbReference type="Pfam" id="PF00889">
    <property type="entry name" value="EF_TS"/>
    <property type="match status" value="1"/>
</dbReference>
<dbReference type="SUPFAM" id="SSF54713">
    <property type="entry name" value="Elongation factor Ts (EF-Ts), dimerisation domain"/>
    <property type="match status" value="2"/>
</dbReference>
<dbReference type="SUPFAM" id="SSF46934">
    <property type="entry name" value="UBA-like"/>
    <property type="match status" value="1"/>
</dbReference>
<dbReference type="PROSITE" id="PS01126">
    <property type="entry name" value="EF_TS_1"/>
    <property type="match status" value="1"/>
</dbReference>
<dbReference type="PROSITE" id="PS01127">
    <property type="entry name" value="EF_TS_2"/>
    <property type="match status" value="1"/>
</dbReference>
<evidence type="ECO:0000255" key="1">
    <source>
        <dbReference type="HAMAP-Rule" id="MF_00050"/>
    </source>
</evidence>
<organism>
    <name type="scientific">Oenococcus oeni (strain ATCC BAA-331 / PSU-1)</name>
    <dbReference type="NCBI Taxonomy" id="203123"/>
    <lineage>
        <taxon>Bacteria</taxon>
        <taxon>Bacillati</taxon>
        <taxon>Bacillota</taxon>
        <taxon>Bacilli</taxon>
        <taxon>Lactobacillales</taxon>
        <taxon>Lactobacillaceae</taxon>
        <taxon>Oenococcus</taxon>
    </lineage>
</organism>
<keyword id="KW-0963">Cytoplasm</keyword>
<keyword id="KW-0251">Elongation factor</keyword>
<keyword id="KW-0648">Protein biosynthesis</keyword>
<keyword id="KW-1185">Reference proteome</keyword>
<feature type="chain" id="PRO_1000006140" description="Elongation factor Ts">
    <location>
        <begin position="1"/>
        <end position="292"/>
    </location>
</feature>
<feature type="region of interest" description="Involved in Mg(2+) ion dislocation from EF-Tu" evidence="1">
    <location>
        <begin position="80"/>
        <end position="83"/>
    </location>
</feature>
<accession>Q04F87</accession>
<name>EFTS_OENOB</name>
<protein>
    <recommendedName>
        <fullName evidence="1">Elongation factor Ts</fullName>
        <shortName evidence="1">EF-Ts</shortName>
    </recommendedName>
</protein>